<keyword id="KW-0963">Cytoplasm</keyword>
<keyword id="KW-0521">NADP</keyword>
<keyword id="KW-0560">Oxidoreductase</keyword>
<keyword id="KW-0671">Queuosine biosynthesis</keyword>
<dbReference type="EC" id="1.7.1.13" evidence="1"/>
<dbReference type="EMBL" id="CP000964">
    <property type="protein sequence ID" value="ACI06594.1"/>
    <property type="molecule type" value="Genomic_DNA"/>
</dbReference>
<dbReference type="SMR" id="B5XV05"/>
<dbReference type="KEGG" id="kpe:KPK_0985"/>
<dbReference type="HOGENOM" id="CLU_054738_0_0_6"/>
<dbReference type="UniPathway" id="UPA00392"/>
<dbReference type="Proteomes" id="UP000001734">
    <property type="component" value="Chromosome"/>
</dbReference>
<dbReference type="GO" id="GO:0005737">
    <property type="term" value="C:cytoplasm"/>
    <property type="evidence" value="ECO:0007669"/>
    <property type="project" value="UniProtKB-SubCell"/>
</dbReference>
<dbReference type="GO" id="GO:0033739">
    <property type="term" value="F:preQ1 synthase activity"/>
    <property type="evidence" value="ECO:0007669"/>
    <property type="project" value="UniProtKB-UniRule"/>
</dbReference>
<dbReference type="GO" id="GO:0008616">
    <property type="term" value="P:queuosine biosynthetic process"/>
    <property type="evidence" value="ECO:0007669"/>
    <property type="project" value="UniProtKB-UniRule"/>
</dbReference>
<dbReference type="GO" id="GO:0006400">
    <property type="term" value="P:tRNA modification"/>
    <property type="evidence" value="ECO:0007669"/>
    <property type="project" value="UniProtKB-UniRule"/>
</dbReference>
<dbReference type="Gene3D" id="3.30.1130.10">
    <property type="match status" value="2"/>
</dbReference>
<dbReference type="HAMAP" id="MF_00817">
    <property type="entry name" value="QueF_type2"/>
    <property type="match status" value="1"/>
</dbReference>
<dbReference type="InterPro" id="IPR043133">
    <property type="entry name" value="GTP-CH-I_C/QueF"/>
</dbReference>
<dbReference type="InterPro" id="IPR050084">
    <property type="entry name" value="NADPH_dep_7-cyano-7-deazaG_red"/>
</dbReference>
<dbReference type="InterPro" id="IPR029500">
    <property type="entry name" value="QueF"/>
</dbReference>
<dbReference type="InterPro" id="IPR029139">
    <property type="entry name" value="QueF_N"/>
</dbReference>
<dbReference type="InterPro" id="IPR016428">
    <property type="entry name" value="QueF_type2"/>
</dbReference>
<dbReference type="NCBIfam" id="TIGR03138">
    <property type="entry name" value="QueF"/>
    <property type="match status" value="1"/>
</dbReference>
<dbReference type="PANTHER" id="PTHR34354">
    <property type="entry name" value="NADPH-DEPENDENT 7-CYANO-7-DEAZAGUANINE REDUCTASE"/>
    <property type="match status" value="1"/>
</dbReference>
<dbReference type="PANTHER" id="PTHR34354:SF1">
    <property type="entry name" value="NADPH-DEPENDENT 7-CYANO-7-DEAZAGUANINE REDUCTASE"/>
    <property type="match status" value="1"/>
</dbReference>
<dbReference type="Pfam" id="PF14489">
    <property type="entry name" value="QueF"/>
    <property type="match status" value="1"/>
</dbReference>
<dbReference type="Pfam" id="PF14819">
    <property type="entry name" value="QueF_N"/>
    <property type="match status" value="1"/>
</dbReference>
<dbReference type="PIRSF" id="PIRSF004750">
    <property type="entry name" value="Nitrile_oxidored_YqcD_prd"/>
    <property type="match status" value="1"/>
</dbReference>
<dbReference type="SUPFAM" id="SSF55620">
    <property type="entry name" value="Tetrahydrobiopterin biosynthesis enzymes-like"/>
    <property type="match status" value="1"/>
</dbReference>
<sequence>MSSYDNHQALAGLTLGKSTDYRDTYDASLLQGVPRSLNRDPLGLHADNLPFHGADIWTLYELSWLNGKGLPQVAVGHVELPDTSVNLVESKSFKLYLNSFNQTRFASWQDVAETLTRDLSACAQGEVKVALYRLDELEGQPIAHLHGACIDDQDIEIDNYQFSTDYLQGAASGKIVEETLVSHLLKSNCLITHQPDWGSVQIQYRGAKIDREQLLRYLVSFRHHNEFHEQCVERIFNDILRFCQPESLSVYARYTRRGGLDINPWRSNGDFSPATGRLARQ</sequence>
<organism>
    <name type="scientific">Klebsiella pneumoniae (strain 342)</name>
    <dbReference type="NCBI Taxonomy" id="507522"/>
    <lineage>
        <taxon>Bacteria</taxon>
        <taxon>Pseudomonadati</taxon>
        <taxon>Pseudomonadota</taxon>
        <taxon>Gammaproteobacteria</taxon>
        <taxon>Enterobacterales</taxon>
        <taxon>Enterobacteriaceae</taxon>
        <taxon>Klebsiella/Raoultella group</taxon>
        <taxon>Klebsiella</taxon>
        <taxon>Klebsiella pneumoniae complex</taxon>
    </lineage>
</organism>
<gene>
    <name evidence="1" type="primary">queF</name>
    <name type="ordered locus">KPK_0985</name>
</gene>
<evidence type="ECO:0000255" key="1">
    <source>
        <dbReference type="HAMAP-Rule" id="MF_00817"/>
    </source>
</evidence>
<name>QUEF_KLEP3</name>
<feature type="chain" id="PRO_1000213070" description="NADPH-dependent 7-cyano-7-deazaguanine reductase">
    <location>
        <begin position="1"/>
        <end position="281"/>
    </location>
</feature>
<feature type="active site" description="Thioimide intermediate" evidence="1">
    <location>
        <position position="189"/>
    </location>
</feature>
<feature type="active site" description="Proton donor" evidence="1">
    <location>
        <position position="196"/>
    </location>
</feature>
<feature type="binding site" evidence="1">
    <location>
        <begin position="88"/>
        <end position="90"/>
    </location>
    <ligand>
        <name>substrate</name>
    </ligand>
</feature>
<feature type="binding site" evidence="1">
    <location>
        <begin position="90"/>
        <end position="91"/>
    </location>
    <ligand>
        <name>NADPH</name>
        <dbReference type="ChEBI" id="CHEBI:57783"/>
    </ligand>
</feature>
<feature type="binding site" evidence="1">
    <location>
        <begin position="228"/>
        <end position="229"/>
    </location>
    <ligand>
        <name>substrate</name>
    </ligand>
</feature>
<feature type="binding site" evidence="1">
    <location>
        <begin position="257"/>
        <end position="258"/>
    </location>
    <ligand>
        <name>NADPH</name>
        <dbReference type="ChEBI" id="CHEBI:57783"/>
    </ligand>
</feature>
<proteinExistence type="inferred from homology"/>
<protein>
    <recommendedName>
        <fullName evidence="1">NADPH-dependent 7-cyano-7-deazaguanine reductase</fullName>
        <ecNumber evidence="1">1.7.1.13</ecNumber>
    </recommendedName>
    <alternativeName>
        <fullName evidence="1">7-cyano-7-carbaguanine reductase</fullName>
    </alternativeName>
    <alternativeName>
        <fullName evidence="1">NADPH-dependent nitrile oxidoreductase</fullName>
    </alternativeName>
    <alternativeName>
        <fullName evidence="1">PreQ(0) reductase</fullName>
    </alternativeName>
</protein>
<accession>B5XV05</accession>
<comment type="function">
    <text evidence="1">Catalyzes the NADPH-dependent reduction of 7-cyano-7-deazaguanine (preQ0) to 7-aminomethyl-7-deazaguanine (preQ1).</text>
</comment>
<comment type="catalytic activity">
    <reaction evidence="1">
        <text>7-aminomethyl-7-carbaguanine + 2 NADP(+) = 7-cyano-7-deazaguanine + 2 NADPH + 3 H(+)</text>
        <dbReference type="Rhea" id="RHEA:13409"/>
        <dbReference type="ChEBI" id="CHEBI:15378"/>
        <dbReference type="ChEBI" id="CHEBI:45075"/>
        <dbReference type="ChEBI" id="CHEBI:57783"/>
        <dbReference type="ChEBI" id="CHEBI:58349"/>
        <dbReference type="ChEBI" id="CHEBI:58703"/>
        <dbReference type="EC" id="1.7.1.13"/>
    </reaction>
</comment>
<comment type="pathway">
    <text evidence="1">tRNA modification; tRNA-queuosine biosynthesis.</text>
</comment>
<comment type="subunit">
    <text evidence="1">Homodimer.</text>
</comment>
<comment type="subcellular location">
    <subcellularLocation>
        <location evidence="1">Cytoplasm</location>
    </subcellularLocation>
</comment>
<comment type="similarity">
    <text evidence="1">Belongs to the GTP cyclohydrolase I family. QueF type 2 subfamily.</text>
</comment>
<reference key="1">
    <citation type="journal article" date="2008" name="PLoS Genet.">
        <title>Complete genome sequence of the N2-fixing broad host range endophyte Klebsiella pneumoniae 342 and virulence predictions verified in mice.</title>
        <authorList>
            <person name="Fouts D.E."/>
            <person name="Tyler H.L."/>
            <person name="DeBoy R.T."/>
            <person name="Daugherty S."/>
            <person name="Ren Q."/>
            <person name="Badger J.H."/>
            <person name="Durkin A.S."/>
            <person name="Huot H."/>
            <person name="Shrivastava S."/>
            <person name="Kothari S."/>
            <person name="Dodson R.J."/>
            <person name="Mohamoud Y."/>
            <person name="Khouri H."/>
            <person name="Roesch L.F.W."/>
            <person name="Krogfelt K.A."/>
            <person name="Struve C."/>
            <person name="Triplett E.W."/>
            <person name="Methe B.A."/>
        </authorList>
    </citation>
    <scope>NUCLEOTIDE SEQUENCE [LARGE SCALE GENOMIC DNA]</scope>
    <source>
        <strain>342</strain>
    </source>
</reference>